<reference key="1">
    <citation type="journal article" date="1992" name="J. Bacteriol.">
        <title>Cloning of the HSP70 gene from Halobacterium marismortui: relatedness of archaebacterial HSP70 to its eubacterial homologs and a model for the evolution of the HSP70 gene.</title>
        <authorList>
            <person name="Gupta R.S."/>
            <person name="Singh B."/>
        </authorList>
    </citation>
    <scope>NUCLEOTIDE SEQUENCE [GENOMIC DNA]</scope>
</reference>
<reference key="2">
    <citation type="journal article" date="2004" name="Genome Res.">
        <title>Genome sequence of Haloarcula marismortui: a halophilic archaeon from the Dead Sea.</title>
        <authorList>
            <person name="Baliga N.S."/>
            <person name="Bonneau R."/>
            <person name="Facciotti M.T."/>
            <person name="Pan M."/>
            <person name="Glusman G."/>
            <person name="Deutsch E.W."/>
            <person name="Shannon P."/>
            <person name="Chiu Y."/>
            <person name="Weng R.S."/>
            <person name="Gan R.R."/>
            <person name="Hung P."/>
            <person name="Date S.V."/>
            <person name="Marcotte E."/>
            <person name="Hood L."/>
            <person name="Ng W.V."/>
        </authorList>
    </citation>
    <scope>NUCLEOTIDE SEQUENCE [LARGE SCALE GENOMIC DNA]</scope>
    <source>
        <strain>ATCC 43049 / DSM 3752 / JCM 8966 / VKM B-1809</strain>
    </source>
</reference>
<dbReference type="EMBL" id="M84006">
    <property type="protein sequence ID" value="AAA73181.1"/>
    <property type="molecule type" value="Genomic_DNA"/>
</dbReference>
<dbReference type="EMBL" id="AY596297">
    <property type="protein sequence ID" value="AAV48029.1"/>
    <property type="molecule type" value="Genomic_DNA"/>
</dbReference>
<dbReference type="PIR" id="A42988">
    <property type="entry name" value="A42988"/>
</dbReference>
<dbReference type="RefSeq" id="WP_011224743.1">
    <property type="nucleotide sequence ID" value="NC_006396.1"/>
</dbReference>
<dbReference type="SMR" id="Q01100"/>
<dbReference type="STRING" id="272569.rrnAC3339"/>
<dbReference type="PaxDb" id="272569-rrnAC3339"/>
<dbReference type="EnsemblBacteria" id="AAV48029">
    <property type="protein sequence ID" value="AAV48029"/>
    <property type="gene ID" value="rrnAC3339"/>
</dbReference>
<dbReference type="GeneID" id="40154133"/>
<dbReference type="KEGG" id="hma:rrnAC3339"/>
<dbReference type="PATRIC" id="fig|272569.17.peg.3865"/>
<dbReference type="eggNOG" id="arCOG03060">
    <property type="taxonomic scope" value="Archaea"/>
</dbReference>
<dbReference type="HOGENOM" id="CLU_005965_2_4_2"/>
<dbReference type="Proteomes" id="UP000001169">
    <property type="component" value="Chromosome I"/>
</dbReference>
<dbReference type="GO" id="GO:0005524">
    <property type="term" value="F:ATP binding"/>
    <property type="evidence" value="ECO:0007669"/>
    <property type="project" value="UniProtKB-UniRule"/>
</dbReference>
<dbReference type="GO" id="GO:0140662">
    <property type="term" value="F:ATP-dependent protein folding chaperone"/>
    <property type="evidence" value="ECO:0007669"/>
    <property type="project" value="InterPro"/>
</dbReference>
<dbReference type="GO" id="GO:0051082">
    <property type="term" value="F:unfolded protein binding"/>
    <property type="evidence" value="ECO:0007669"/>
    <property type="project" value="InterPro"/>
</dbReference>
<dbReference type="CDD" id="cd10234">
    <property type="entry name" value="ASKHA_NBD_HSP70_DnaK-like"/>
    <property type="match status" value="1"/>
</dbReference>
<dbReference type="FunFam" id="2.60.34.10:FF:000014">
    <property type="entry name" value="Chaperone protein DnaK HSP70"/>
    <property type="match status" value="1"/>
</dbReference>
<dbReference type="FunFam" id="3.30.420.40:FF:000071">
    <property type="entry name" value="Molecular chaperone DnaK"/>
    <property type="match status" value="1"/>
</dbReference>
<dbReference type="FunFam" id="3.90.640.10:FF:000003">
    <property type="entry name" value="Molecular chaperone DnaK"/>
    <property type="match status" value="1"/>
</dbReference>
<dbReference type="Gene3D" id="1.20.1270.10">
    <property type="match status" value="1"/>
</dbReference>
<dbReference type="Gene3D" id="3.30.420.40">
    <property type="match status" value="2"/>
</dbReference>
<dbReference type="Gene3D" id="3.90.640.10">
    <property type="entry name" value="Actin, Chain A, domain 4"/>
    <property type="match status" value="1"/>
</dbReference>
<dbReference type="Gene3D" id="2.60.34.10">
    <property type="entry name" value="Substrate Binding Domain Of DNAk, Chain A, domain 1"/>
    <property type="match status" value="1"/>
</dbReference>
<dbReference type="HAMAP" id="MF_00332">
    <property type="entry name" value="DnaK"/>
    <property type="match status" value="1"/>
</dbReference>
<dbReference type="InterPro" id="IPR043129">
    <property type="entry name" value="ATPase_NBD"/>
</dbReference>
<dbReference type="InterPro" id="IPR012725">
    <property type="entry name" value="Chaperone_DnaK"/>
</dbReference>
<dbReference type="InterPro" id="IPR018181">
    <property type="entry name" value="Heat_shock_70_CS"/>
</dbReference>
<dbReference type="InterPro" id="IPR029048">
    <property type="entry name" value="HSP70_C_sf"/>
</dbReference>
<dbReference type="InterPro" id="IPR029047">
    <property type="entry name" value="HSP70_peptide-bd_sf"/>
</dbReference>
<dbReference type="InterPro" id="IPR013126">
    <property type="entry name" value="Hsp_70_fam"/>
</dbReference>
<dbReference type="NCBIfam" id="NF001413">
    <property type="entry name" value="PRK00290.1"/>
    <property type="match status" value="1"/>
</dbReference>
<dbReference type="NCBIfam" id="TIGR02350">
    <property type="entry name" value="prok_dnaK"/>
    <property type="match status" value="1"/>
</dbReference>
<dbReference type="PANTHER" id="PTHR19375">
    <property type="entry name" value="HEAT SHOCK PROTEIN 70KDA"/>
    <property type="match status" value="1"/>
</dbReference>
<dbReference type="Pfam" id="PF00012">
    <property type="entry name" value="HSP70"/>
    <property type="match status" value="1"/>
</dbReference>
<dbReference type="PRINTS" id="PR00301">
    <property type="entry name" value="HEATSHOCK70"/>
</dbReference>
<dbReference type="SUPFAM" id="SSF53067">
    <property type="entry name" value="Actin-like ATPase domain"/>
    <property type="match status" value="2"/>
</dbReference>
<dbReference type="SUPFAM" id="SSF100934">
    <property type="entry name" value="Heat shock protein 70kD (HSP70), C-terminal subdomain"/>
    <property type="match status" value="1"/>
</dbReference>
<dbReference type="SUPFAM" id="SSF100920">
    <property type="entry name" value="Heat shock protein 70kD (HSP70), peptide-binding domain"/>
    <property type="match status" value="1"/>
</dbReference>
<dbReference type="PROSITE" id="PS00297">
    <property type="entry name" value="HSP70_1"/>
    <property type="match status" value="1"/>
</dbReference>
<dbReference type="PROSITE" id="PS00329">
    <property type="entry name" value="HSP70_2"/>
    <property type="match status" value="1"/>
</dbReference>
<dbReference type="PROSITE" id="PS01036">
    <property type="entry name" value="HSP70_3"/>
    <property type="match status" value="1"/>
</dbReference>
<organism>
    <name type="scientific">Haloarcula marismortui (strain ATCC 43049 / DSM 3752 / JCM 8966 / VKM B-1809)</name>
    <name type="common">Halobacterium marismortui</name>
    <dbReference type="NCBI Taxonomy" id="272569"/>
    <lineage>
        <taxon>Archaea</taxon>
        <taxon>Methanobacteriati</taxon>
        <taxon>Methanobacteriota</taxon>
        <taxon>Stenosarchaea group</taxon>
        <taxon>Halobacteria</taxon>
        <taxon>Halobacteriales</taxon>
        <taxon>Haloarculaceae</taxon>
        <taxon>Haloarcula</taxon>
    </lineage>
</organism>
<name>DNAK_HALMA</name>
<accession>Q01100</accession>
<accession>Q5UXH4</accession>
<gene>
    <name type="primary">dnaK</name>
    <name type="ordered locus">rrnAC3339</name>
</gene>
<protein>
    <recommendedName>
        <fullName>Chaperone protein DnaK</fullName>
    </recommendedName>
    <alternativeName>
        <fullName>HSP70</fullName>
    </alternativeName>
    <alternativeName>
        <fullName>Heat shock 70 kDa protein</fullName>
    </alternativeName>
    <alternativeName>
        <fullName>Heat shock protein 70</fullName>
    </alternativeName>
</protein>
<evidence type="ECO:0000250" key="1"/>
<evidence type="ECO:0000256" key="2">
    <source>
        <dbReference type="SAM" id="MobiDB-lite"/>
    </source>
</evidence>
<evidence type="ECO:0000305" key="3"/>
<keyword id="KW-0067">ATP-binding</keyword>
<keyword id="KW-0143">Chaperone</keyword>
<keyword id="KW-0547">Nucleotide-binding</keyword>
<keyword id="KW-1185">Reference proteome</keyword>
<proteinExistence type="inferred from homology"/>
<comment type="function">
    <text evidence="1">Acts as a chaperone.</text>
</comment>
<comment type="similarity">
    <text evidence="3">Belongs to the heat shock protein 70 family.</text>
</comment>
<feature type="chain" id="PRO_0000078594" description="Chaperone protein DnaK">
    <location>
        <begin position="1"/>
        <end position="635"/>
    </location>
</feature>
<feature type="region of interest" description="Disordered" evidence="2">
    <location>
        <begin position="487"/>
        <end position="538"/>
    </location>
</feature>
<feature type="region of interest" description="Disordered" evidence="2">
    <location>
        <begin position="575"/>
        <end position="635"/>
    </location>
</feature>
<feature type="compositionally biased region" description="Basic and acidic residues" evidence="2">
    <location>
        <begin position="492"/>
        <end position="521"/>
    </location>
</feature>
<feature type="compositionally biased region" description="Acidic residues" evidence="2">
    <location>
        <begin position="522"/>
        <end position="536"/>
    </location>
</feature>
<feature type="compositionally biased region" description="Gly residues" evidence="2">
    <location>
        <begin position="588"/>
        <end position="611"/>
    </location>
</feature>
<feature type="compositionally biased region" description="Acidic residues" evidence="2">
    <location>
        <begin position="616"/>
        <end position="635"/>
    </location>
</feature>
<feature type="sequence conflict" description="In Ref. 1; AAA73181." evidence="3" ref="1">
    <original>E</original>
    <variation>Q</variation>
    <location>
        <position position="76"/>
    </location>
</feature>
<feature type="sequence conflict" description="In Ref. 1; AAA73181." evidence="3" ref="1">
    <original>E</original>
    <variation>K</variation>
    <location>
        <position position="137"/>
    </location>
</feature>
<feature type="sequence conflict" description="In Ref. 1; AAA73181." evidence="3" ref="1">
    <original>V</original>
    <variation>L</variation>
    <location>
        <position position="290"/>
    </location>
</feature>
<feature type="sequence conflict" description="In Ref. 1; AAA73181." evidence="3" ref="1">
    <original>KNV</original>
    <variation>RTS</variation>
    <location>
        <begin position="336"/>
        <end position="338"/>
    </location>
</feature>
<feature type="sequence conflict" description="In Ref. 1; AAA73181." evidence="3" ref="1">
    <original>A</original>
    <variation>R</variation>
    <location>
        <position position="429"/>
    </location>
</feature>
<feature type="sequence conflict" description="In Ref. 1; AAA73181." evidence="3" ref="1">
    <original>ER</original>
    <variation>DG</variation>
    <location>
        <begin position="504"/>
        <end position="505"/>
    </location>
</feature>
<feature type="sequence conflict" description="In Ref. 1; AAA73181." evidence="3" ref="1">
    <original>AGGAAGAGPGGAAGPGGAAGPGGAAGGAAEQG</original>
    <variation>QAVPRALVRVARPAPGALPDRAAQQAAAEQGA</variation>
    <location>
        <begin position="586"/>
        <end position="617"/>
    </location>
</feature>
<sequence length="635" mass="68531">MASNKILGIDLGTTNSAFAVMEGGDPEIIVNGEGERTTPSVVAFDDGERLVGKPAKNQAVKNPDETIQSIKRHMGEDDYSVELDGEEYTPEQVSAMILQKIKHDAEEYLGDEIEKAVITVPAYFNDRQRQATKDAGEIAGFEVERIVNEPTAAAMAYGLDDESDQTVLVYDLGGGTFDVSILDLGGGVYEVVATNGDNDLGGDDWDHAIIDYLADEFEAEHGIDLRDDRQALQRLTEAAEEAKIELSSRKETRINLPFIATTDDGPLDLEQKITRAKFESLTEDLIERTVGPTEQALADADYTKSDIDEVILVGGSTRMPQVQDQVEEMTGQEPKKNVNPDEAVALGAAIQAGVLSGDVDDIVLLDVTPLSLGVEVKGGLFERLIDKNTTIPTEESKIFTTAQDNQTQVQIRVFQGEREIAEENELLGAFALSGIPPAPAGTPQIEVSFNIDENGIVNVEAEDKGSGNKEDITIEGGAGLSDDQIEEMQQEAEQHAEEDEQRRERIEARNEAEASVRRAETLLDENEEEIDEDLQSDIEAKIEDVEEVLEDEDATKEDYEAVTETLSEELQEIGKQMYQDQAQQAAGGAAGAGPGGAAGPGGAAGPGGAAGGAAEQGEEYVDADFEDVEESDEDE</sequence>